<gene>
    <name evidence="12 13" type="primary">flp-6</name>
    <name type="ORF">F07D3.2</name>
</gene>
<dbReference type="EMBL" id="AF042392">
    <property type="protein sequence ID" value="AAC08943.1"/>
    <property type="molecule type" value="mRNA"/>
</dbReference>
<dbReference type="EMBL" id="Z71179">
    <property type="protein sequence ID" value="CAA94889.2"/>
    <property type="molecule type" value="Genomic_DNA"/>
</dbReference>
<dbReference type="EMBL" id="Z70755">
    <property type="protein sequence ID" value="CAA94889.2"/>
    <property type="status" value="JOINED"/>
    <property type="molecule type" value="Genomic_DNA"/>
</dbReference>
<dbReference type="PIR" id="T20554">
    <property type="entry name" value="T20554"/>
</dbReference>
<dbReference type="PIR" id="T42413">
    <property type="entry name" value="T42413"/>
</dbReference>
<dbReference type="RefSeq" id="NP_505444.1">
    <property type="nucleotide sequence ID" value="NM_073043.6"/>
</dbReference>
<dbReference type="BioGRID" id="44365">
    <property type="interactions" value="4"/>
</dbReference>
<dbReference type="FunCoup" id="Q19165">
    <property type="interactions" value="93"/>
</dbReference>
<dbReference type="STRING" id="6239.F07D3.2.1"/>
<dbReference type="PaxDb" id="6239-F07D3.2"/>
<dbReference type="PeptideAtlas" id="Q19165"/>
<dbReference type="EnsemblMetazoa" id="F07D3.2.1">
    <property type="protein sequence ID" value="F07D3.2.1"/>
    <property type="gene ID" value="WBGene00001449"/>
</dbReference>
<dbReference type="GeneID" id="179327"/>
<dbReference type="KEGG" id="cel:CELE_F07D3.2"/>
<dbReference type="UCSC" id="F07D3.2">
    <property type="organism name" value="c. elegans"/>
</dbReference>
<dbReference type="AGR" id="WB:WBGene00001449"/>
<dbReference type="CTD" id="179327"/>
<dbReference type="WormBase" id="F07D3.2">
    <property type="protein sequence ID" value="CE29252"/>
    <property type="gene ID" value="WBGene00001449"/>
    <property type="gene designation" value="flp-6"/>
</dbReference>
<dbReference type="eggNOG" id="ENOG502SF14">
    <property type="taxonomic scope" value="Eukaryota"/>
</dbReference>
<dbReference type="GeneTree" id="ENSGT00970000197308"/>
<dbReference type="HOGENOM" id="CLU_134007_0_0_1"/>
<dbReference type="InParanoid" id="Q19165"/>
<dbReference type="OMA" id="NPMEMEK"/>
<dbReference type="OrthoDB" id="5813613at2759"/>
<dbReference type="PhylomeDB" id="Q19165"/>
<dbReference type="PRO" id="PR:Q19165"/>
<dbReference type="Proteomes" id="UP000001940">
    <property type="component" value="Chromosome V"/>
</dbReference>
<dbReference type="Bgee" id="WBGene00001449">
    <property type="expression patterns" value="Expressed in larva and 3 other cell types or tissues"/>
</dbReference>
<dbReference type="GO" id="GO:0005576">
    <property type="term" value="C:extracellular region"/>
    <property type="evidence" value="ECO:0000305"/>
    <property type="project" value="WormBase"/>
</dbReference>
<dbReference type="GO" id="GO:0048018">
    <property type="term" value="F:receptor ligand activity"/>
    <property type="evidence" value="ECO:0000305"/>
    <property type="project" value="WormBase"/>
</dbReference>
<dbReference type="GO" id="GO:0008340">
    <property type="term" value="P:determination of adult lifespan"/>
    <property type="evidence" value="ECO:0000315"/>
    <property type="project" value="WormBase"/>
</dbReference>
<dbReference type="GO" id="GO:0030718">
    <property type="term" value="P:germ-line stem cell population maintenance"/>
    <property type="evidence" value="ECO:0000315"/>
    <property type="project" value="WormBase"/>
</dbReference>
<dbReference type="GO" id="GO:0007218">
    <property type="term" value="P:neuropeptide signaling pathway"/>
    <property type="evidence" value="ECO:0000315"/>
    <property type="project" value="WormBase"/>
</dbReference>
<dbReference type="GO" id="GO:0009408">
    <property type="term" value="P:response to heat"/>
    <property type="evidence" value="ECO:0000315"/>
    <property type="project" value="WormBase"/>
</dbReference>
<dbReference type="InterPro" id="IPR002544">
    <property type="entry name" value="FMRFamid-related_peptide-like"/>
</dbReference>
<dbReference type="InterPro" id="IPR051041">
    <property type="entry name" value="FMRFamide-related_np"/>
</dbReference>
<dbReference type="PANTHER" id="PTHR20986:SF14">
    <property type="entry name" value="FMRFAMIDE-LIKE NEUROPEPTIDES 6"/>
    <property type="match status" value="1"/>
</dbReference>
<dbReference type="PANTHER" id="PTHR20986">
    <property type="entry name" value="FMRFAMIDE-RELATED PEPTIDES"/>
    <property type="match status" value="1"/>
</dbReference>
<dbReference type="Pfam" id="PF01581">
    <property type="entry name" value="FARP"/>
    <property type="match status" value="6"/>
</dbReference>
<dbReference type="SMART" id="SM00029">
    <property type="entry name" value="GASTRIN"/>
    <property type="match status" value="4"/>
</dbReference>
<name>FLP06_CAEEL</name>
<sequence length="170" mass="19593">MNSRGLILTLGVVIAVAFAQQDSEVEREMMKRKSAYMRFGRSDGGNPMEMEKRKSAYMRFGKRSSGGDEQELVGGDDIDMEKRKSAYMRFGKRSGPQEDDMPMEKRKSAYMRFGKRSSDMEVIGNEGVDGDAHDLFKRKSAYMRFGKRSMGEEEDHDMMKRKSAYMRFGR</sequence>
<protein>
    <recommendedName>
        <fullName>FMRFamide-like neuropeptides 6</fullName>
    </recommendedName>
    <component>
        <recommendedName>
            <fullName>QQDSEVEREMM</fullName>
        </recommendedName>
    </component>
    <component>
        <recommendedName>
            <fullName>KSAYMRF-amide 1</fullName>
        </recommendedName>
        <alternativeName>
            <fullName>AF8 1</fullName>
        </alternativeName>
        <alternativeName>
            <fullName>PF3 1</fullName>
        </alternativeName>
    </component>
    <component>
        <recommendedName>
            <fullName>KSAYMRF-amide 2</fullName>
        </recommendedName>
        <alternativeName>
            <fullName>AF8 2</fullName>
        </alternativeName>
        <alternativeName>
            <fullName>PF3 2</fullName>
        </alternativeName>
    </component>
    <component>
        <recommendedName>
            <fullName>KSAYMRF-amide 3</fullName>
        </recommendedName>
        <alternativeName>
            <fullName>AF8 3</fullName>
        </alternativeName>
        <alternativeName>
            <fullName>PF3 3</fullName>
        </alternativeName>
    </component>
    <component>
        <recommendedName>
            <fullName>KSAYMRF-amide 4</fullName>
        </recommendedName>
        <alternativeName>
            <fullName>AF8 4</fullName>
        </alternativeName>
        <alternativeName>
            <fullName>PF3 4</fullName>
        </alternativeName>
    </component>
    <component>
        <recommendedName>
            <fullName>KSAYMRF-amide 5</fullName>
        </recommendedName>
        <alternativeName>
            <fullName>AF8 5</fullName>
        </alternativeName>
        <alternativeName>
            <fullName>PF3 5</fullName>
        </alternativeName>
    </component>
    <component>
        <recommendedName>
            <fullName>KSAYMRF-amide 6</fullName>
        </recommendedName>
        <alternativeName>
            <fullName>AF8 6</fullName>
        </alternativeName>
        <alternativeName>
            <fullName>PF3 6</fullName>
        </alternativeName>
    </component>
</protein>
<feature type="signal peptide" evidence="1 9">
    <location>
        <begin position="1"/>
        <end position="19"/>
    </location>
</feature>
<feature type="peptide" id="PRO_0000312048" description="QQDSEVEREMM" evidence="4">
    <location>
        <begin position="20"/>
        <end position="30"/>
    </location>
</feature>
<feature type="peptide" id="PRO_0000312049" description="KSAYMRF-amide 1" evidence="6 7">
    <location>
        <begin position="33"/>
        <end position="39"/>
    </location>
</feature>
<feature type="propeptide" id="PRO_0000312050" evidence="1">
    <location>
        <begin position="42"/>
        <end position="51"/>
    </location>
</feature>
<feature type="peptide" id="PRO_0000312051" description="KSAYMRF-amide 2" evidence="6 7">
    <location>
        <begin position="54"/>
        <end position="60"/>
    </location>
</feature>
<feature type="propeptide" id="PRO_0000312052" evidence="1">
    <location>
        <begin position="63"/>
        <end position="81"/>
    </location>
</feature>
<feature type="peptide" id="PRO_0000312053" description="KSAYMRF-amide 3" evidence="6 7">
    <location>
        <begin position="84"/>
        <end position="90"/>
    </location>
</feature>
<feature type="propeptide" id="PRO_0000312054" evidence="1">
    <location>
        <begin position="93"/>
        <end position="104"/>
    </location>
</feature>
<feature type="peptide" id="PRO_0000312055" description="KSAYMRF-amide 4" evidence="6 7">
    <location>
        <begin position="107"/>
        <end position="113"/>
    </location>
</feature>
<feature type="propeptide" id="PRO_0000312056" evidence="1">
    <location>
        <begin position="116"/>
        <end position="136"/>
    </location>
</feature>
<feature type="peptide" id="PRO_0000312057" description="KSAYMRF-amide 5" evidence="6 7">
    <location>
        <begin position="139"/>
        <end position="145"/>
    </location>
</feature>
<feature type="propeptide" id="PRO_0000312058" evidence="1">
    <location>
        <begin position="148"/>
        <end position="159"/>
    </location>
</feature>
<feature type="peptide" id="PRO_0000312059" description="KSAYMRF-amide 6" evidence="6 7">
    <location>
        <begin position="162"/>
        <end position="168"/>
    </location>
</feature>
<feature type="region of interest" description="Disordered" evidence="2">
    <location>
        <begin position="150"/>
        <end position="170"/>
    </location>
</feature>
<feature type="compositionally biased region" description="Basic residues" evidence="2">
    <location>
        <begin position="159"/>
        <end position="170"/>
    </location>
</feature>
<feature type="modified residue" description="Pyrrolidone carboxylic acid" evidence="4">
    <location>
        <position position="20"/>
    </location>
</feature>
<feature type="modified residue" description="Phenylalanine amide" evidence="6 7">
    <location>
        <position position="39"/>
    </location>
</feature>
<feature type="modified residue" description="Phenylalanine amide" evidence="6 7">
    <location>
        <position position="60"/>
    </location>
</feature>
<feature type="modified residue" description="Phenylalanine amide" evidence="6 7">
    <location>
        <position position="90"/>
    </location>
</feature>
<feature type="modified residue" description="Phenylalanine amide" evidence="6 7">
    <location>
        <position position="113"/>
    </location>
</feature>
<feature type="modified residue" description="Phenylalanine amide" evidence="6 7">
    <location>
        <position position="145"/>
    </location>
</feature>
<feature type="modified residue" description="Phenylalanine amide" evidence="6 7">
    <location>
        <position position="168"/>
    </location>
</feature>
<keyword id="KW-0027">Amidation</keyword>
<keyword id="KW-0165">Cleavage on pair of basic residues</keyword>
<keyword id="KW-0903">Direct protein sequencing</keyword>
<keyword id="KW-0527">Neuropeptide</keyword>
<keyword id="KW-0873">Pyrrolidone carboxylic acid</keyword>
<keyword id="KW-1185">Reference proteome</keyword>
<keyword id="KW-0677">Repeat</keyword>
<keyword id="KW-0964">Secreted</keyword>
<keyword id="KW-0732">Signal</keyword>
<proteinExistence type="evidence at protein level"/>
<comment type="function">
    <text evidence="5">FMRFamides and FMRFamide-like peptides are neuropeptides. KSAYMRF-amide has an excitatory effect on dissected pharyngeal myogenic muscle system.</text>
</comment>
<comment type="subcellular location">
    <subcellularLocation>
        <location evidence="10">Secreted</location>
    </subcellularLocation>
</comment>
<comment type="tissue specificity">
    <text evidence="3">Each flp gene is expressed in a distinct set of neurons. Flp-6 is expressed in the ASE sensory neurons, AFD, ASG, PVT and I1 neurons.</text>
</comment>
<comment type="developmental stage">
    <text evidence="3 8">Expressed from the comma stage of embryogenesis, during all larval stages, and in adults.</text>
</comment>
<comment type="mass spectrometry" mass="919.0" method="MALDI" evidence="7">
    <molecule>KSAYMRF-amide 1</molecule>
</comment>
<comment type="mass spectrometry" mass="901.27" method="MALDI" evidence="6">
    <molecule>KSAYMRF-amide 1</molecule>
</comment>
<comment type="similarity">
    <text evidence="1">Belongs to the FARP (FMRFamide related peptide) family.</text>
</comment>
<organism>
    <name type="scientific">Caenorhabditis elegans</name>
    <dbReference type="NCBI Taxonomy" id="6239"/>
    <lineage>
        <taxon>Eukaryota</taxon>
        <taxon>Metazoa</taxon>
        <taxon>Ecdysozoa</taxon>
        <taxon>Nematoda</taxon>
        <taxon>Chromadorea</taxon>
        <taxon>Rhabditida</taxon>
        <taxon>Rhabditina</taxon>
        <taxon>Rhabditomorpha</taxon>
        <taxon>Rhabditoidea</taxon>
        <taxon>Rhabditidae</taxon>
        <taxon>Peloderinae</taxon>
        <taxon>Caenorhabditis</taxon>
    </lineage>
</organism>
<accession>Q19165</accession>
<accession>P81283</accession>
<accession>Q21257</accession>
<accession>Q9TZZ5</accession>
<evidence type="ECO:0000255" key="1"/>
<evidence type="ECO:0000256" key="2">
    <source>
        <dbReference type="SAM" id="MobiDB-lite"/>
    </source>
</evidence>
<evidence type="ECO:0000269" key="3">
    <source>
    </source>
</evidence>
<evidence type="ECO:0000269" key="4">
    <source>
    </source>
</evidence>
<evidence type="ECO:0000269" key="5">
    <source>
    </source>
</evidence>
<evidence type="ECO:0000269" key="6">
    <source>
    </source>
</evidence>
<evidence type="ECO:0000269" key="7">
    <source>
    </source>
</evidence>
<evidence type="ECO:0000269" key="8">
    <source>
    </source>
</evidence>
<evidence type="ECO:0000303" key="9">
    <source>
    </source>
</evidence>
<evidence type="ECO:0000305" key="10"/>
<evidence type="ECO:0000312" key="11">
    <source>
        <dbReference type="EMBL" id="AAC08943.1"/>
    </source>
</evidence>
<evidence type="ECO:0000312" key="12">
    <source>
        <dbReference type="EMBL" id="CAA94889.2"/>
    </source>
</evidence>
<evidence type="ECO:0000312" key="13">
    <source>
        <dbReference type="WormBase" id="F07D3.2"/>
    </source>
</evidence>
<reference evidence="10 11" key="1">
    <citation type="journal article" date="1998" name="Brain Res. Mol. Brain Res.">
        <title>FMRFamide-related gene family in the nematode, Caenorhabditis elegans.</title>
        <authorList>
            <person name="Nelson L.S."/>
            <person name="Kim K."/>
            <person name="Memmott J.E."/>
            <person name="Li C."/>
        </authorList>
    </citation>
    <scope>NUCLEOTIDE SEQUENCE [MRNA]</scope>
    <scope>DEVELOPMENTAL STAGE</scope>
    <source>
        <strain evidence="11">Bristol N2</strain>
    </source>
</reference>
<reference evidence="12" key="2">
    <citation type="journal article" date="1998" name="Science">
        <title>Genome sequence of the nematode C. elegans: a platform for investigating biology.</title>
        <authorList>
            <consortium name="The C. elegans sequencing consortium"/>
        </authorList>
    </citation>
    <scope>NUCLEOTIDE SEQUENCE [LARGE SCALE GENOMIC DNA]</scope>
    <source>
        <strain>Bristol N2</strain>
    </source>
</reference>
<reference evidence="10" key="3">
    <citation type="journal article" date="2005" name="Biochem. Biophys. Res. Commun.">
        <title>Discovering neuropeptides in Caenorhabditis elegans by two dimensional liquid chromatography and mass spectrometry.</title>
        <authorList>
            <person name="Husson S.J."/>
            <person name="Clynen E."/>
            <person name="Baggerman G."/>
            <person name="De Loof A."/>
            <person name="Schoofs L."/>
        </authorList>
    </citation>
    <scope>PROTEIN SEQUENCE OF 20-30</scope>
    <scope>PYROGLUTAMATE FORMATION AT GLN-20</scope>
    <source>
        <strain evidence="4">Bristol N2</strain>
    </source>
</reference>
<reference evidence="10" key="4">
    <citation type="journal article" date="1998" name="Biochem. Biophys. Res. Commun.">
        <title>KSAYMRFamide (PF3/AF8) is present in the free-living nematode, Caenorhabditis elegans.</title>
        <authorList>
            <person name="Marks N.J."/>
            <person name="Maule A.G."/>
            <person name="Geary T.G."/>
            <person name="Thompson D.P."/>
            <person name="Li C."/>
            <person name="Halton D.W."/>
            <person name="Shaw C."/>
        </authorList>
    </citation>
    <scope>PROTEIN SEQUENCE OF 33-39; 54-60; 84-90; 107-113; 139-145 AND 162-168</scope>
    <scope>MASS SPECTROMETRY</scope>
    <scope>AMIDATION AT PHE-39; PHE-60; PHE-90; PHE-113; PHE-145 AND PHE-168</scope>
</reference>
<reference key="5">
    <citation type="journal article" date="2017" name="Elife">
        <title>Luqin-like RYamide peptides regulate food-evoked responses in C. elegans.</title>
        <authorList>
            <person name="Ohno H."/>
            <person name="Yoshida M."/>
            <person name="Sato T."/>
            <person name="Kato J."/>
            <person name="Miyazato M."/>
            <person name="Kojima M."/>
            <person name="Ida T."/>
            <person name="Iino Y."/>
        </authorList>
    </citation>
    <scope>PROTEIN SEQUENCE OF 33-39; 54-60; 84-90; 107-113; 139-145 AND 162-168</scope>
    <scope>AMIDATION AT PHE-39; PHE-60; PHE-90; PHE-113; PHE-145 AND PHE-168</scope>
    <scope>MASS SPECTROMETRY</scope>
</reference>
<reference key="6">
    <citation type="journal article" date="2004" name="J. Comp. Neurol.">
        <title>Expression and regulation of an FMRFamide-related neuropeptide gene family in Caenorhabditis elegans.</title>
        <authorList>
            <person name="Kim K."/>
            <person name="Li C."/>
        </authorList>
    </citation>
    <scope>TISSUE SPECIFICITY</scope>
    <scope>DEVELOPMENTAL STAGE</scope>
</reference>
<reference key="7">
    <citation type="journal article" date="2005" name="J. Neurobiol.">
        <title>Role of a FMRFamide-like family of neuropeptides in the pharyngeal nervous system of Caenorhabditis elegans.</title>
        <authorList>
            <person name="Papaioannou S."/>
            <person name="Marsden D."/>
            <person name="Franks C.J."/>
            <person name="Walker R.J."/>
            <person name="Holden-Dye L."/>
        </authorList>
    </citation>
    <scope>FUNCTION</scope>
</reference>